<protein>
    <recommendedName>
        <fullName>Nitrogenase iron protein</fullName>
        <ecNumber>1.18.6.1</ecNumber>
    </recommendedName>
    <alternativeName>
        <fullName>Nitrogenase Fe protein</fullName>
    </alternativeName>
    <alternativeName>
        <fullName>Nitrogenase component II</fullName>
    </alternativeName>
    <alternativeName>
        <fullName>Nitrogenase reductase</fullName>
    </alternativeName>
</protein>
<reference key="1">
    <citation type="journal article" date="1990" name="Gene">
        <title>The cloning and functional characterization of the nifH gene of Rhodospirillum rubrum.</title>
        <authorList>
            <person name="Lehman L.J."/>
            <person name="Fitzmaurice W.P."/>
            <person name="Roberts G.P."/>
        </authorList>
    </citation>
    <scope>NUCLEOTIDE SEQUENCE [GENOMIC DNA]</scope>
</reference>
<reference key="2">
    <citation type="journal article" date="1985" name="Proc. Natl. Acad. Sci. U.S.A.">
        <title>Covalent modification of the iron protein of nitrogenase from Rhodospirillum rubrum by adenosine diphosphoribosylation of a specific arginine residue.</title>
        <authorList>
            <person name="Pope M.R."/>
            <person name="Murrell S.A."/>
            <person name="Ludden P.W."/>
        </authorList>
    </citation>
    <scope>PROTEIN SEQUENCE OF 101-104</scope>
    <scope>IDENTIFICATION BY MASS SPECTROMETRY</scope>
    <scope>ADP-RIBOSYLATION AT ARG-102</scope>
</reference>
<dbReference type="EC" id="1.18.6.1"/>
<dbReference type="EMBL" id="M33774">
    <property type="protein sequence ID" value="AAA26463.1"/>
    <property type="molecule type" value="Genomic_DNA"/>
</dbReference>
<dbReference type="PIR" id="JW0039">
    <property type="entry name" value="JW0039"/>
</dbReference>
<dbReference type="RefSeq" id="WP_011388765.1">
    <property type="nucleotide sequence ID" value="NZ_NRSC01000036.1"/>
</dbReference>
<dbReference type="SMR" id="P22921"/>
<dbReference type="OMA" id="YGDVKCV"/>
<dbReference type="GO" id="GO:0016610">
    <property type="term" value="C:nitrogenase complex"/>
    <property type="evidence" value="ECO:0000315"/>
    <property type="project" value="CACAO"/>
</dbReference>
<dbReference type="GO" id="GO:0051539">
    <property type="term" value="F:4 iron, 4 sulfur cluster binding"/>
    <property type="evidence" value="ECO:0007669"/>
    <property type="project" value="UniProtKB-KW"/>
</dbReference>
<dbReference type="GO" id="GO:0005524">
    <property type="term" value="F:ATP binding"/>
    <property type="evidence" value="ECO:0007669"/>
    <property type="project" value="UniProtKB-UniRule"/>
</dbReference>
<dbReference type="GO" id="GO:0046872">
    <property type="term" value="F:metal ion binding"/>
    <property type="evidence" value="ECO:0007669"/>
    <property type="project" value="UniProtKB-KW"/>
</dbReference>
<dbReference type="GO" id="GO:0016163">
    <property type="term" value="F:nitrogenase activity"/>
    <property type="evidence" value="ECO:0007669"/>
    <property type="project" value="UniProtKB-UniRule"/>
</dbReference>
<dbReference type="GO" id="GO:0009399">
    <property type="term" value="P:nitrogen fixation"/>
    <property type="evidence" value="ECO:0007669"/>
    <property type="project" value="UniProtKB-UniRule"/>
</dbReference>
<dbReference type="CDD" id="cd02040">
    <property type="entry name" value="NifH"/>
    <property type="match status" value="1"/>
</dbReference>
<dbReference type="FunFam" id="3.40.50.300:FF:001379">
    <property type="entry name" value="Nitrogenase iron protein 1"/>
    <property type="match status" value="1"/>
</dbReference>
<dbReference type="Gene3D" id="3.40.50.300">
    <property type="entry name" value="P-loop containing nucleotide triphosphate hydrolases"/>
    <property type="match status" value="1"/>
</dbReference>
<dbReference type="HAMAP" id="MF_00533">
    <property type="entry name" value="NifH"/>
    <property type="match status" value="1"/>
</dbReference>
<dbReference type="InterPro" id="IPR030655">
    <property type="entry name" value="NifH/chlL_CS"/>
</dbReference>
<dbReference type="InterPro" id="IPR000392">
    <property type="entry name" value="NifH/frxC"/>
</dbReference>
<dbReference type="InterPro" id="IPR005977">
    <property type="entry name" value="Nitrogenase_Fe_NifH"/>
</dbReference>
<dbReference type="InterPro" id="IPR027417">
    <property type="entry name" value="P-loop_NTPase"/>
</dbReference>
<dbReference type="NCBIfam" id="TIGR01287">
    <property type="entry name" value="nifH"/>
    <property type="match status" value="1"/>
</dbReference>
<dbReference type="PANTHER" id="PTHR42864">
    <property type="entry name" value="LIGHT-INDEPENDENT PROTOCHLOROPHYLLIDE REDUCTASE IRON-SULFUR ATP-BINDING PROTEIN"/>
    <property type="match status" value="1"/>
</dbReference>
<dbReference type="PANTHER" id="PTHR42864:SF2">
    <property type="entry name" value="LIGHT-INDEPENDENT PROTOCHLOROPHYLLIDE REDUCTASE IRON-SULFUR ATP-BINDING PROTEIN"/>
    <property type="match status" value="1"/>
</dbReference>
<dbReference type="Pfam" id="PF00142">
    <property type="entry name" value="Fer4_NifH"/>
    <property type="match status" value="1"/>
</dbReference>
<dbReference type="PIRSF" id="PIRSF000363">
    <property type="entry name" value="Nitrogenase_iron"/>
    <property type="match status" value="1"/>
</dbReference>
<dbReference type="PRINTS" id="PR00091">
    <property type="entry name" value="NITROGNASEII"/>
</dbReference>
<dbReference type="SUPFAM" id="SSF52540">
    <property type="entry name" value="P-loop containing nucleoside triphosphate hydrolases"/>
    <property type="match status" value="1"/>
</dbReference>
<dbReference type="PROSITE" id="PS00746">
    <property type="entry name" value="NIFH_FRXC_1"/>
    <property type="match status" value="1"/>
</dbReference>
<dbReference type="PROSITE" id="PS00692">
    <property type="entry name" value="NIFH_FRXC_2"/>
    <property type="match status" value="1"/>
</dbReference>
<dbReference type="PROSITE" id="PS51026">
    <property type="entry name" value="NIFH_FRXC_3"/>
    <property type="match status" value="1"/>
</dbReference>
<proteinExistence type="evidence at protein level"/>
<accession>P22921</accession>
<organism>
    <name type="scientific">Rhodospirillum rubrum</name>
    <dbReference type="NCBI Taxonomy" id="1085"/>
    <lineage>
        <taxon>Bacteria</taxon>
        <taxon>Pseudomonadati</taxon>
        <taxon>Pseudomonadota</taxon>
        <taxon>Alphaproteobacteria</taxon>
        <taxon>Rhodospirillales</taxon>
        <taxon>Rhodospirillaceae</taxon>
        <taxon>Rhodospirillum</taxon>
    </lineage>
</organism>
<name>NIFH_RHORU</name>
<evidence type="ECO:0000250" key="1"/>
<evidence type="ECO:0000255" key="2"/>
<evidence type="ECO:0000269" key="3">
    <source>
    </source>
</evidence>
<evidence type="ECO:0000305" key="4"/>
<gene>
    <name type="primary">nifH</name>
</gene>
<feature type="chain" id="PRO_0000139529" description="Nitrogenase iron protein">
    <location>
        <begin position="1"/>
        <end position="295"/>
    </location>
</feature>
<feature type="binding site" evidence="2">
    <location>
        <begin position="11"/>
        <end position="18"/>
    </location>
    <ligand>
        <name>ATP</name>
        <dbReference type="ChEBI" id="CHEBI:30616"/>
    </ligand>
</feature>
<feature type="binding site" evidence="1">
    <location>
        <position position="99"/>
    </location>
    <ligand>
        <name>[4Fe-4S] cluster</name>
        <dbReference type="ChEBI" id="CHEBI:49883"/>
        <note>ligand shared between dimeric partners</note>
    </ligand>
</feature>
<feature type="binding site" evidence="1">
    <location>
        <position position="133"/>
    </location>
    <ligand>
        <name>[4Fe-4S] cluster</name>
        <dbReference type="ChEBI" id="CHEBI:49883"/>
        <note>ligand shared between dimeric partners</note>
    </ligand>
</feature>
<feature type="modified residue" description="ADP-ribosylarginine; by dinitrogenase reductase ADP-ribosyltransferase" evidence="3">
    <location>
        <position position="102"/>
    </location>
</feature>
<sequence length="295" mass="31642">MSALRQIAFYGKGGIGKSTTSQNTLAALVEMGQRILIVGCDPKADSTRLILNTKLQDTVLHLAAEAGSVEDLDVADVVKIGYKGIKCTESGGPEPGVGCAGRGVITAINFLEENGAYDDLDYVSYDVLGDVVCGGFAMPIRENKAQEIYIVMSGEMMALYAANNIAKGILKYAHTGGVRLGGLICNERQTDKEVELAEALAGRLGCRLIHFVPRDNGVQHAELRRQTVIQYAPDSKQAGEYRTLATKIHNNSGQGVVPTPITMEDLEEMLMEFGIMKSDEEALAELEAKESAAAN</sequence>
<keyword id="KW-0004">4Fe-4S</keyword>
<keyword id="KW-0013">ADP-ribosylation</keyword>
<keyword id="KW-0067">ATP-binding</keyword>
<keyword id="KW-0903">Direct protein sequencing</keyword>
<keyword id="KW-0408">Iron</keyword>
<keyword id="KW-0411">Iron-sulfur</keyword>
<keyword id="KW-0479">Metal-binding</keyword>
<keyword id="KW-0535">Nitrogen fixation</keyword>
<keyword id="KW-0547">Nucleotide-binding</keyword>
<keyword id="KW-0560">Oxidoreductase</keyword>
<comment type="function">
    <text>The key enzymatic reactions in nitrogen fixation are catalyzed by the nitrogenase complex, which has 2 components: the iron protein and the molybdenum-iron protein.</text>
</comment>
<comment type="catalytic activity">
    <reaction>
        <text>N2 + 8 reduced [2Fe-2S]-[ferredoxin] + 16 ATP + 16 H2O = H2 + 8 oxidized [2Fe-2S]-[ferredoxin] + 2 NH4(+) + 16 ADP + 16 phosphate + 6 H(+)</text>
        <dbReference type="Rhea" id="RHEA:21448"/>
        <dbReference type="Rhea" id="RHEA-COMP:10000"/>
        <dbReference type="Rhea" id="RHEA-COMP:10001"/>
        <dbReference type="ChEBI" id="CHEBI:15377"/>
        <dbReference type="ChEBI" id="CHEBI:15378"/>
        <dbReference type="ChEBI" id="CHEBI:17997"/>
        <dbReference type="ChEBI" id="CHEBI:18276"/>
        <dbReference type="ChEBI" id="CHEBI:28938"/>
        <dbReference type="ChEBI" id="CHEBI:30616"/>
        <dbReference type="ChEBI" id="CHEBI:33737"/>
        <dbReference type="ChEBI" id="CHEBI:33738"/>
        <dbReference type="ChEBI" id="CHEBI:43474"/>
        <dbReference type="ChEBI" id="CHEBI:456216"/>
        <dbReference type="EC" id="1.18.6.1"/>
    </reaction>
</comment>
<comment type="cofactor">
    <cofactor>
        <name>[4Fe-4S] cluster</name>
        <dbReference type="ChEBI" id="CHEBI:49883"/>
    </cofactor>
    <text>Binds 1 [4Fe-4S] cluster per dimer.</text>
</comment>
<comment type="subunit">
    <text>Homodimer.</text>
</comment>
<comment type="PTM">
    <text>The reversible ADP-ribosylation of Arg-102 inactivates the nitrogenase reductase and regulates nitrogenase activity.</text>
</comment>
<comment type="similarity">
    <text evidence="4">Belongs to the NifH/BchL/ChlL family.</text>
</comment>